<gene>
    <name type="primary">PNP</name>
    <name type="synonym">NP</name>
</gene>
<dbReference type="EC" id="2.4.2.1" evidence="1"/>
<dbReference type="EMBL" id="BT021545">
    <property type="protein sequence ID" value="AAX46392.1"/>
    <property type="molecule type" value="mRNA"/>
</dbReference>
<dbReference type="EMBL" id="BC103291">
    <property type="protein sequence ID" value="AAI03292.2"/>
    <property type="molecule type" value="mRNA"/>
</dbReference>
<dbReference type="PIR" id="S66203">
    <property type="entry name" value="S66203"/>
</dbReference>
<dbReference type="PDB" id="1A9O">
    <property type="method" value="X-ray"/>
    <property type="resolution" value="2.00 A"/>
    <property type="chains" value="A=1-289"/>
</dbReference>
<dbReference type="PDB" id="1A9P">
    <property type="method" value="X-ray"/>
    <property type="resolution" value="2.40 A"/>
    <property type="chains" value="A=1-289"/>
</dbReference>
<dbReference type="PDB" id="1A9Q">
    <property type="method" value="X-ray"/>
    <property type="resolution" value="2.00 A"/>
    <property type="chains" value="A=1-282"/>
</dbReference>
<dbReference type="PDB" id="1A9R">
    <property type="method" value="X-ray"/>
    <property type="resolution" value="2.00 A"/>
    <property type="chains" value="A=1-282"/>
</dbReference>
<dbReference type="PDB" id="1A9S">
    <property type="method" value="X-ray"/>
    <property type="resolution" value="2.00 A"/>
    <property type="chains" value="A=1-289"/>
</dbReference>
<dbReference type="PDB" id="1A9T">
    <property type="method" value="X-ray"/>
    <property type="resolution" value="2.00 A"/>
    <property type="chains" value="A=1-284"/>
</dbReference>
<dbReference type="PDB" id="1B8N">
    <property type="method" value="X-ray"/>
    <property type="resolution" value="2.00 A"/>
    <property type="chains" value="A=1-284"/>
</dbReference>
<dbReference type="PDB" id="1B8O">
    <property type="method" value="X-ray"/>
    <property type="resolution" value="1.50 A"/>
    <property type="chains" value="A=1-284"/>
</dbReference>
<dbReference type="PDB" id="1FXU">
    <property type="method" value="X-ray"/>
    <property type="resolution" value="2.20 A"/>
    <property type="chains" value="A=1-289"/>
</dbReference>
<dbReference type="PDB" id="1LV8">
    <property type="method" value="X-ray"/>
    <property type="resolution" value="2.30 A"/>
    <property type="chains" value="A/B/C/D/E/F=1-289"/>
</dbReference>
<dbReference type="PDB" id="1LVU">
    <property type="method" value="X-ray"/>
    <property type="resolution" value="2.05 A"/>
    <property type="chains" value="A/B/C/D/E/F=1-289"/>
</dbReference>
<dbReference type="PDB" id="1PBN">
    <property type="method" value="X-ray"/>
    <property type="resolution" value="2.00 A"/>
    <property type="chains" value="A=1-289"/>
</dbReference>
<dbReference type="PDB" id="1V48">
    <property type="method" value="X-ray"/>
    <property type="resolution" value="2.20 A"/>
    <property type="chains" value="A=1-289"/>
</dbReference>
<dbReference type="PDB" id="1VFN">
    <property type="method" value="X-ray"/>
    <property type="resolution" value="2.15 A"/>
    <property type="chains" value="A=4-284"/>
</dbReference>
<dbReference type="PDB" id="2AI1">
    <property type="method" value="X-ray"/>
    <property type="resolution" value="2.00 A"/>
    <property type="chains" value="A=1-289"/>
</dbReference>
<dbReference type="PDB" id="2AI2">
    <property type="method" value="X-ray"/>
    <property type="resolution" value="1.70 A"/>
    <property type="chains" value="A=1-289"/>
</dbReference>
<dbReference type="PDB" id="2AI3">
    <property type="method" value="X-ray"/>
    <property type="resolution" value="1.70 A"/>
    <property type="chains" value="A=1-289"/>
</dbReference>
<dbReference type="PDB" id="2QPL">
    <property type="method" value="X-ray"/>
    <property type="resolution" value="2.10 A"/>
    <property type="chains" value="A=3-284"/>
</dbReference>
<dbReference type="PDB" id="3FUC">
    <property type="method" value="X-ray"/>
    <property type="resolution" value="1.45 A"/>
    <property type="chains" value="A/B/C=1-284"/>
</dbReference>
<dbReference type="PDB" id="3PNP">
    <property type="method" value="X-ray"/>
    <property type="resolution" value="1.60 A"/>
    <property type="chains" value="A=1-289"/>
</dbReference>
<dbReference type="PDB" id="4PNP">
    <property type="method" value="X-ray"/>
    <property type="resolution" value="1.80 A"/>
    <property type="chains" value="A=1-289"/>
</dbReference>
<dbReference type="PDBsum" id="1A9O"/>
<dbReference type="PDBsum" id="1A9P"/>
<dbReference type="PDBsum" id="1A9Q"/>
<dbReference type="PDBsum" id="1A9R"/>
<dbReference type="PDBsum" id="1A9S"/>
<dbReference type="PDBsum" id="1A9T"/>
<dbReference type="PDBsum" id="1B8N"/>
<dbReference type="PDBsum" id="1B8O"/>
<dbReference type="PDBsum" id="1FXU"/>
<dbReference type="PDBsum" id="1LV8"/>
<dbReference type="PDBsum" id="1LVU"/>
<dbReference type="PDBsum" id="1PBN"/>
<dbReference type="PDBsum" id="1V48"/>
<dbReference type="PDBsum" id="1VFN"/>
<dbReference type="PDBsum" id="2AI1"/>
<dbReference type="PDBsum" id="2AI2"/>
<dbReference type="PDBsum" id="2AI3"/>
<dbReference type="PDBsum" id="2QPL"/>
<dbReference type="PDBsum" id="3FUC"/>
<dbReference type="PDBsum" id="3PNP"/>
<dbReference type="PDBsum" id="4PNP"/>
<dbReference type="SMR" id="P55859"/>
<dbReference type="FunCoup" id="P55859">
    <property type="interactions" value="380"/>
</dbReference>
<dbReference type="STRING" id="9913.ENSBTAP00000016346"/>
<dbReference type="BindingDB" id="P55859"/>
<dbReference type="ChEMBL" id="CHEMBL2935"/>
<dbReference type="DrugCentral" id="P55859"/>
<dbReference type="PaxDb" id="9913-ENSBTAP00000016346"/>
<dbReference type="PeptideAtlas" id="P55859"/>
<dbReference type="eggNOG" id="KOG3984">
    <property type="taxonomic scope" value="Eukaryota"/>
</dbReference>
<dbReference type="HOGENOM" id="CLU_054456_1_2_1"/>
<dbReference type="InParanoid" id="P55859"/>
<dbReference type="OrthoDB" id="10261782at2759"/>
<dbReference type="TreeFam" id="TF300049"/>
<dbReference type="BRENDA" id="2.4.2.1">
    <property type="organism ID" value="908"/>
</dbReference>
<dbReference type="SABIO-RK" id="P55859"/>
<dbReference type="UniPathway" id="UPA00606"/>
<dbReference type="EvolutionaryTrace" id="P55859"/>
<dbReference type="Proteomes" id="UP000009136">
    <property type="component" value="Unplaced"/>
</dbReference>
<dbReference type="GO" id="GO:0005737">
    <property type="term" value="C:cytoplasm"/>
    <property type="evidence" value="ECO:0000318"/>
    <property type="project" value="GO_Central"/>
</dbReference>
<dbReference type="GO" id="GO:0047975">
    <property type="term" value="F:guanosine phosphorylase activity"/>
    <property type="evidence" value="ECO:0007669"/>
    <property type="project" value="RHEA"/>
</dbReference>
<dbReference type="GO" id="GO:0004731">
    <property type="term" value="F:purine-nucleoside phosphorylase activity"/>
    <property type="evidence" value="ECO:0000314"/>
    <property type="project" value="UniProtKB"/>
</dbReference>
<dbReference type="GO" id="GO:0006166">
    <property type="term" value="P:purine ribonucleoside salvage"/>
    <property type="evidence" value="ECO:0007669"/>
    <property type="project" value="UniProtKB-KW"/>
</dbReference>
<dbReference type="CDD" id="cd09009">
    <property type="entry name" value="PNP-EcPNPII_like"/>
    <property type="match status" value="1"/>
</dbReference>
<dbReference type="FunFam" id="3.40.50.1580:FF:000004">
    <property type="entry name" value="Purine nucleoside phosphorylase"/>
    <property type="match status" value="1"/>
</dbReference>
<dbReference type="Gene3D" id="3.40.50.1580">
    <property type="entry name" value="Nucleoside phosphorylase domain"/>
    <property type="match status" value="1"/>
</dbReference>
<dbReference type="InterPro" id="IPR000845">
    <property type="entry name" value="Nucleoside_phosphorylase_d"/>
</dbReference>
<dbReference type="InterPro" id="IPR035994">
    <property type="entry name" value="Nucleoside_phosphorylase_sf"/>
</dbReference>
<dbReference type="InterPro" id="IPR011270">
    <property type="entry name" value="Pur_Nuc_Pase_Ino/Guo-sp"/>
</dbReference>
<dbReference type="InterPro" id="IPR011268">
    <property type="entry name" value="Purine_phosphorylase"/>
</dbReference>
<dbReference type="InterPro" id="IPR018099">
    <property type="entry name" value="Purine_phosphorylase-2_CS"/>
</dbReference>
<dbReference type="NCBIfam" id="TIGR01700">
    <property type="entry name" value="PNPH"/>
    <property type="match status" value="1"/>
</dbReference>
<dbReference type="NCBIfam" id="TIGR01697">
    <property type="entry name" value="PNPH-PUNA-XAPA"/>
    <property type="match status" value="1"/>
</dbReference>
<dbReference type="NCBIfam" id="NF006054">
    <property type="entry name" value="PRK08202.1"/>
    <property type="match status" value="1"/>
</dbReference>
<dbReference type="PANTHER" id="PTHR11904">
    <property type="entry name" value="METHYLTHIOADENOSINE/PURINE NUCLEOSIDE PHOSPHORYLASE"/>
    <property type="match status" value="1"/>
</dbReference>
<dbReference type="PANTHER" id="PTHR11904:SF12">
    <property type="entry name" value="PURINE NUCLEOSIDE PHOSPHORYLASE"/>
    <property type="match status" value="1"/>
</dbReference>
<dbReference type="Pfam" id="PF01048">
    <property type="entry name" value="PNP_UDP_1"/>
    <property type="match status" value="1"/>
</dbReference>
<dbReference type="PIRSF" id="PIRSF000477">
    <property type="entry name" value="PurNPase"/>
    <property type="match status" value="1"/>
</dbReference>
<dbReference type="SUPFAM" id="SSF53167">
    <property type="entry name" value="Purine and uridine phosphorylases"/>
    <property type="match status" value="1"/>
</dbReference>
<dbReference type="PROSITE" id="PS01240">
    <property type="entry name" value="PNP_MTAP_2"/>
    <property type="match status" value="1"/>
</dbReference>
<protein>
    <recommendedName>
        <fullName>Purine nucleoside phosphorylase</fullName>
        <shortName>PNP</shortName>
        <ecNumber evidence="1">2.4.2.1</ecNumber>
    </recommendedName>
    <alternativeName>
        <fullName>Inosine phosphorylase</fullName>
    </alternativeName>
    <alternativeName>
        <fullName>Inosine-guanosine phosphorylase</fullName>
    </alternativeName>
</protein>
<feature type="chain" id="PRO_0000184535" description="Purine nucleoside phosphorylase">
    <location>
        <begin position="1"/>
        <end position="289"/>
    </location>
</feature>
<feature type="binding site" evidence="3 6 7 10 11 14 15">
    <location>
        <position position="33"/>
    </location>
    <ligand>
        <name>phosphate</name>
        <dbReference type="ChEBI" id="CHEBI:43474"/>
    </ligand>
</feature>
<feature type="binding site" evidence="3 7 11 14 15">
    <location>
        <position position="64"/>
    </location>
    <ligand>
        <name>phosphate</name>
        <dbReference type="ChEBI" id="CHEBI:43474"/>
    </ligand>
</feature>
<feature type="binding site" evidence="3 6 7 8 9 10 11 14 15">
    <location>
        <begin position="84"/>
        <end position="86"/>
    </location>
    <ligand>
        <name>phosphate</name>
        <dbReference type="ChEBI" id="CHEBI:43474"/>
    </ligand>
</feature>
<feature type="binding site" evidence="3 7 10 11">
    <location>
        <position position="88"/>
    </location>
    <ligand>
        <name>a purine D-ribonucleoside</name>
        <dbReference type="ChEBI" id="CHEBI:142355"/>
    </ligand>
</feature>
<feature type="binding site" evidence="3 6 7 8 9 10 11 14 15">
    <location>
        <position position="116"/>
    </location>
    <ligand>
        <name>phosphate</name>
        <dbReference type="ChEBI" id="CHEBI:43474"/>
    </ligand>
</feature>
<feature type="binding site" evidence="3 5 7 8 9 13">
    <location>
        <position position="201"/>
    </location>
    <ligand>
        <name>a purine D-ribonucleoside</name>
        <dbReference type="ChEBI" id="CHEBI:142355"/>
    </ligand>
</feature>
<feature type="binding site" evidence="3 7 10 11">
    <location>
        <position position="219"/>
    </location>
    <ligand>
        <name>a purine D-ribonucleoside</name>
        <dbReference type="ChEBI" id="CHEBI:142355"/>
    </ligand>
</feature>
<feature type="binding site" evidence="3 6 7 8 9 10 11 14 15">
    <location>
        <position position="220"/>
    </location>
    <ligand>
        <name>phosphate</name>
        <dbReference type="ChEBI" id="CHEBI:43474"/>
    </ligand>
</feature>
<feature type="binding site" evidence="3 5 7 8 9 13">
    <location>
        <position position="243"/>
    </location>
    <ligand>
        <name>a purine D-ribonucleoside</name>
        <dbReference type="ChEBI" id="CHEBI:142355"/>
    </ligand>
</feature>
<feature type="binding site" evidence="3 7 10 11">
    <location>
        <position position="257"/>
    </location>
    <ligand>
        <name>a purine D-ribonucleoside</name>
        <dbReference type="ChEBI" id="CHEBI:142355"/>
    </ligand>
</feature>
<feature type="site" description="Important for substrate specificity" evidence="1">
    <location>
        <position position="243"/>
    </location>
</feature>
<feature type="modified residue" description="N-acetylmethionine" evidence="1">
    <location>
        <position position="1"/>
    </location>
</feature>
<feature type="modified residue" description="Phosphoserine" evidence="1">
    <location>
        <position position="251"/>
    </location>
</feature>
<feature type="sequence conflict" description="In Ref. 1; AA sequence." evidence="4" ref="1">
    <original>A</original>
    <variation>Q</variation>
    <location>
        <position position="2"/>
    </location>
</feature>
<feature type="sequence conflict" description="In Ref. 2; AAX46392." evidence="4" ref="2">
    <original>P</original>
    <variation>S</variation>
    <location>
        <position position="25"/>
    </location>
</feature>
<feature type="helix" evidence="17">
    <location>
        <begin position="7"/>
        <end position="20"/>
    </location>
</feature>
<feature type="strand" evidence="17">
    <location>
        <begin position="26"/>
        <end position="31"/>
    </location>
</feature>
<feature type="helix" evidence="17">
    <location>
        <begin position="36"/>
        <end position="41"/>
    </location>
</feature>
<feature type="strand" evidence="17">
    <location>
        <begin position="43"/>
        <end position="49"/>
    </location>
</feature>
<feature type="helix" evidence="17">
    <location>
        <begin position="50"/>
        <end position="52"/>
    </location>
</feature>
<feature type="strand" evidence="16">
    <location>
        <begin position="62"/>
        <end position="64"/>
    </location>
</feature>
<feature type="strand" evidence="17">
    <location>
        <begin position="67"/>
        <end position="73"/>
    </location>
</feature>
<feature type="strand" evidence="17">
    <location>
        <begin position="76"/>
        <end position="83"/>
    </location>
</feature>
<feature type="helix" evidence="17">
    <location>
        <begin position="87"/>
        <end position="89"/>
    </location>
</feature>
<feature type="helix" evidence="17">
    <location>
        <begin position="93"/>
        <end position="96"/>
    </location>
</feature>
<feature type="helix" evidence="17">
    <location>
        <begin position="98"/>
        <end position="106"/>
    </location>
</feature>
<feature type="strand" evidence="17">
    <location>
        <begin position="110"/>
        <end position="119"/>
    </location>
</feature>
<feature type="strand" evidence="17">
    <location>
        <begin position="129"/>
        <end position="137"/>
    </location>
</feature>
<feature type="helix" evidence="17">
    <location>
        <begin position="138"/>
        <end position="141"/>
    </location>
</feature>
<feature type="turn" evidence="17">
    <location>
        <begin position="153"/>
        <end position="155"/>
    </location>
</feature>
<feature type="helix" evidence="17">
    <location>
        <begin position="168"/>
        <end position="181"/>
    </location>
</feature>
<feature type="strand" evidence="17">
    <location>
        <begin position="188"/>
        <end position="194"/>
    </location>
</feature>
<feature type="helix" evidence="17">
    <location>
        <begin position="203"/>
        <end position="211"/>
    </location>
</feature>
<feature type="strand" evidence="17">
    <location>
        <begin position="215"/>
        <end position="221"/>
    </location>
</feature>
<feature type="helix" evidence="17">
    <location>
        <begin position="222"/>
        <end position="230"/>
    </location>
</feature>
<feature type="strand" evidence="17">
    <location>
        <begin position="234"/>
        <end position="244"/>
    </location>
</feature>
<feature type="strand" evidence="16">
    <location>
        <begin position="248"/>
        <end position="250"/>
    </location>
</feature>
<feature type="helix" evidence="17">
    <location>
        <begin position="257"/>
        <end position="278"/>
    </location>
</feature>
<feature type="helix" evidence="17">
    <location>
        <begin position="279"/>
        <end position="281"/>
    </location>
</feature>
<feature type="strand" evidence="16">
    <location>
        <begin position="284"/>
        <end position="287"/>
    </location>
</feature>
<accession>P55859</accession>
<accession>Q3ZBH6</accession>
<accession>Q58DQ2</accession>
<proteinExistence type="evidence at protein level"/>
<evidence type="ECO:0000250" key="1">
    <source>
        <dbReference type="UniProtKB" id="P00491"/>
    </source>
</evidence>
<evidence type="ECO:0000250" key="2">
    <source>
        <dbReference type="UniProtKB" id="P23492"/>
    </source>
</evidence>
<evidence type="ECO:0000269" key="3">
    <source>
    </source>
</evidence>
<evidence type="ECO:0000305" key="4"/>
<evidence type="ECO:0000305" key="5">
    <source>
    </source>
</evidence>
<evidence type="ECO:0007744" key="6">
    <source>
        <dbReference type="PDB" id="1A9O"/>
    </source>
</evidence>
<evidence type="ECO:0007744" key="7">
    <source>
        <dbReference type="PDB" id="1A9P"/>
    </source>
</evidence>
<evidence type="ECO:0007744" key="8">
    <source>
        <dbReference type="PDB" id="1A9Q"/>
    </source>
</evidence>
<evidence type="ECO:0007744" key="9">
    <source>
        <dbReference type="PDB" id="1A9R"/>
    </source>
</evidence>
<evidence type="ECO:0007744" key="10">
    <source>
        <dbReference type="PDB" id="1A9S"/>
    </source>
</evidence>
<evidence type="ECO:0007744" key="11">
    <source>
        <dbReference type="PDB" id="1A9T"/>
    </source>
</evidence>
<evidence type="ECO:0007744" key="12">
    <source>
        <dbReference type="PDB" id="1PBN"/>
    </source>
</evidence>
<evidence type="ECO:0007744" key="13">
    <source>
        <dbReference type="PDB" id="1VFN"/>
    </source>
</evidence>
<evidence type="ECO:0007744" key="14">
    <source>
        <dbReference type="PDB" id="3PNP"/>
    </source>
</evidence>
<evidence type="ECO:0007744" key="15">
    <source>
        <dbReference type="PDB" id="4PNP"/>
    </source>
</evidence>
<evidence type="ECO:0007829" key="16">
    <source>
        <dbReference type="PDB" id="1A9O"/>
    </source>
</evidence>
<evidence type="ECO:0007829" key="17">
    <source>
        <dbReference type="PDB" id="3FUC"/>
    </source>
</evidence>
<comment type="function">
    <text evidence="1">Catalyzes the phosphorolytic breakdown of the N-glycosidic bond in the beta-(deoxy)ribonucleoside molecules, with the formation of the corresponding free purine bases and pentose-1-phosphate (By similarity). Preferentially acts on 6-oxopurine nucleosides including inosine and guanosine (By similarity).</text>
</comment>
<comment type="catalytic activity">
    <reaction evidence="1">
        <text>inosine + phosphate = alpha-D-ribose 1-phosphate + hypoxanthine</text>
        <dbReference type="Rhea" id="RHEA:27646"/>
        <dbReference type="ChEBI" id="CHEBI:17368"/>
        <dbReference type="ChEBI" id="CHEBI:17596"/>
        <dbReference type="ChEBI" id="CHEBI:43474"/>
        <dbReference type="ChEBI" id="CHEBI:57720"/>
        <dbReference type="EC" id="2.4.2.1"/>
    </reaction>
</comment>
<comment type="catalytic activity">
    <reaction evidence="1">
        <text>guanosine + phosphate = alpha-D-ribose 1-phosphate + guanine</text>
        <dbReference type="Rhea" id="RHEA:13233"/>
        <dbReference type="ChEBI" id="CHEBI:16235"/>
        <dbReference type="ChEBI" id="CHEBI:16750"/>
        <dbReference type="ChEBI" id="CHEBI:43474"/>
        <dbReference type="ChEBI" id="CHEBI:57720"/>
        <dbReference type="EC" id="2.4.2.1"/>
    </reaction>
</comment>
<comment type="catalytic activity">
    <reaction evidence="2">
        <text>2'-deoxyguanosine + phosphate = 2-deoxy-alpha-D-ribose 1-phosphate + guanine</text>
        <dbReference type="Rhea" id="RHEA:27738"/>
        <dbReference type="ChEBI" id="CHEBI:16235"/>
        <dbReference type="ChEBI" id="CHEBI:17172"/>
        <dbReference type="ChEBI" id="CHEBI:43474"/>
        <dbReference type="ChEBI" id="CHEBI:57259"/>
        <dbReference type="EC" id="2.4.2.1"/>
    </reaction>
</comment>
<comment type="catalytic activity">
    <reaction evidence="2">
        <text>2'-deoxyinosine + phosphate = 2-deoxy-alpha-D-ribose 1-phosphate + hypoxanthine</text>
        <dbReference type="Rhea" id="RHEA:27750"/>
        <dbReference type="ChEBI" id="CHEBI:17368"/>
        <dbReference type="ChEBI" id="CHEBI:28997"/>
        <dbReference type="ChEBI" id="CHEBI:43474"/>
        <dbReference type="ChEBI" id="CHEBI:57259"/>
        <dbReference type="EC" id="2.4.2.1"/>
    </reaction>
</comment>
<comment type="pathway">
    <text evidence="1">Purine metabolism; purine nucleoside salvage.</text>
</comment>
<comment type="subunit">
    <text evidence="1">Homotrimer.</text>
</comment>
<comment type="subcellular location">
    <subcellularLocation>
        <location evidence="1">Cytoplasm</location>
    </subcellularLocation>
</comment>
<comment type="similarity">
    <text evidence="4">Belongs to the PNP/MTAP phosphorylase family.</text>
</comment>
<organism>
    <name type="scientific">Bos taurus</name>
    <name type="common">Bovine</name>
    <dbReference type="NCBI Taxonomy" id="9913"/>
    <lineage>
        <taxon>Eukaryota</taxon>
        <taxon>Metazoa</taxon>
        <taxon>Chordata</taxon>
        <taxon>Craniata</taxon>
        <taxon>Vertebrata</taxon>
        <taxon>Euteleostomi</taxon>
        <taxon>Mammalia</taxon>
        <taxon>Eutheria</taxon>
        <taxon>Laurasiatheria</taxon>
        <taxon>Artiodactyla</taxon>
        <taxon>Ruminantia</taxon>
        <taxon>Pecora</taxon>
        <taxon>Bovidae</taxon>
        <taxon>Bovinae</taxon>
        <taxon>Bos</taxon>
    </lineage>
</organism>
<reference key="1">
    <citation type="journal article" date="1995" name="FEBS Lett.">
        <title>Calf spleen purine nucleoside phosphorylase: purification, sequence and crystal structure of its complex with an N(7)-acycloguanosine inhibitor.</title>
        <authorList>
            <person name="Bzowska A."/>
            <person name="Luic M."/>
            <person name="Schroeder W."/>
            <person name="Shugar D."/>
            <person name="Saenger W."/>
            <person name="Koellner G."/>
        </authorList>
    </citation>
    <scope>PROTEIN SEQUENCE</scope>
    <source>
        <tissue>Spleen</tissue>
    </source>
</reference>
<reference key="2">
    <citation type="journal article" date="2005" name="BMC Genomics">
        <title>Characterization of 954 bovine full-CDS cDNA sequences.</title>
        <authorList>
            <person name="Harhay G.P."/>
            <person name="Sonstegard T.S."/>
            <person name="Keele J.W."/>
            <person name="Heaton M.P."/>
            <person name="Clawson M.L."/>
            <person name="Snelling W.M."/>
            <person name="Wiedmann R.T."/>
            <person name="Van Tassell C.P."/>
            <person name="Smith T.P.L."/>
        </authorList>
    </citation>
    <scope>NUCLEOTIDE SEQUENCE [LARGE SCALE MRNA]</scope>
</reference>
<reference key="3">
    <citation type="submission" date="2005-08" db="EMBL/GenBank/DDBJ databases">
        <authorList>
            <consortium name="NIH - Mammalian Gene Collection (MGC) project"/>
        </authorList>
    </citation>
    <scope>NUCLEOTIDE SEQUENCE [LARGE SCALE MRNA]</scope>
    <source>
        <strain>Hereford</strain>
        <tissue>Uterus</tissue>
    </source>
</reference>
<reference evidence="13" key="4">
    <citation type="journal article" date="1997" name="J. Mol. Biol.">
        <title>Crystal structure of calf spleen purine nucleoside phosphorylase in a complex with hypoxanthine at 2.15-A resolution.</title>
        <authorList>
            <person name="Koellner G."/>
            <person name="Luic M."/>
            <person name="Shugar D."/>
            <person name="Saenger W."/>
            <person name="Bzowska A."/>
        </authorList>
    </citation>
    <scope>X-RAY CRYSTALLOGRAPHY (2.15 ANGSTROMS) OF 4-284 IN COMPLEX WITH HYPOXANTHINE</scope>
    <source>
        <tissue>Spleen</tissue>
    </source>
</reference>
<reference evidence="6 7 8 9 10 11 12" key="5">
    <citation type="journal article" date="1998" name="Biochemistry">
        <title>Calf spleen purine nucleoside phosphorylase complexed with substrates and substrate analogues.</title>
        <authorList>
            <person name="Mao C."/>
            <person name="Cook W.J."/>
            <person name="Zhou M."/>
            <person name="Federov A.A."/>
            <person name="Almo S.C."/>
            <person name="Ealick S.E."/>
        </authorList>
    </citation>
    <scope>X-RAY CRYSTALLOGRAPHY (2.00 ANGSTROMS) OF 1-282 IN COMPLEXES WITH THE SUBSTRATE ANALOGS 9-DEAZAINOSINE; INOSINE; HYPOXANTHINE AND PHOSPHATE</scope>
    <source>
        <tissue>Spleen</tissue>
    </source>
</reference>
<reference evidence="14 15" key="6">
    <citation type="submission" date="1998-03" db="PDB data bank">
        <title>The high resolution crystal structure of bovine spleen purine nucleoside phosphorylase in complex forms with phosphate and 9-deazainosine.</title>
        <authorList>
            <person name="Pugmire M.J."/>
            <person name="Mao C."/>
            <person name="Ealick S.E."/>
        </authorList>
    </citation>
    <scope>X-RAY CRYSTALLOGRAPHY (1.6 ANGSTROMS) IN COMPLEX WITH PHOSPHATE</scope>
    <source>
        <tissue>Spleen</tissue>
    </source>
</reference>
<sequence>MANGYTYEDYQDTAKWLLSHTEQRPQVAVICGSGLGGLVNKLTQAQTFDYSEIPNFPESTVPGHAGRLVFGILNGRACVMMQGRFHMYEGYPFWKVTFPVRVFRLLGVETLVVTNAAGGLNPNFEVGDIMLIRDHINLPGFSGENPLRGPNEERFGVRFPAMSDAYDRDMRQKAHSTWKQMGEQRELQEGTYVMLGGPNFETVAECRLLRNLGADAVGMSTVPEVIVARHCGLRVFGFSLITNKVIMDYESQGKANHEEVLEAGKQAAQKLEQFVSLLMASIPVSGHTG</sequence>
<name>PNPH_BOVIN</name>
<keyword id="KW-0002">3D-structure</keyword>
<keyword id="KW-0007">Acetylation</keyword>
<keyword id="KW-0963">Cytoplasm</keyword>
<keyword id="KW-0903">Direct protein sequencing</keyword>
<keyword id="KW-0328">Glycosyltransferase</keyword>
<keyword id="KW-0597">Phosphoprotein</keyword>
<keyword id="KW-0660">Purine salvage</keyword>
<keyword id="KW-1185">Reference proteome</keyword>
<keyword id="KW-0808">Transferase</keyword>